<gene>
    <name type="primary">SULT1A1</name>
    <name type="synonym">STP</name>
</gene>
<organism>
    <name type="scientific">Macaca fascicularis</name>
    <name type="common">Crab-eating macaque</name>
    <name type="synonym">Cynomolgus monkey</name>
    <dbReference type="NCBI Taxonomy" id="9541"/>
    <lineage>
        <taxon>Eukaryota</taxon>
        <taxon>Metazoa</taxon>
        <taxon>Chordata</taxon>
        <taxon>Craniata</taxon>
        <taxon>Vertebrata</taxon>
        <taxon>Euteleostomi</taxon>
        <taxon>Mammalia</taxon>
        <taxon>Eutheria</taxon>
        <taxon>Euarchontoglires</taxon>
        <taxon>Primates</taxon>
        <taxon>Haplorrhini</taxon>
        <taxon>Catarrhini</taxon>
        <taxon>Cercopithecidae</taxon>
        <taxon>Cercopithecinae</taxon>
        <taxon>Macaca</taxon>
    </lineage>
</organism>
<sequence length="295" mass="34239">MELIQDTSRPPLEYVKGVPLIKYFAEALGPLQSFRARPDDLLISTYPKSGTTWVSQILDMIYQGGDLEKCRRAPIFMRVPFLEFKVPGIPSGMETLKDTPAPRLLKTHLPLALLPQTLLDQKVKVVYVARNAKDVAVSYYHFYHMAKVHPEPGTWDSFLEKFMAGEVSYGSWYQHVQEWWELSHTHPVLYLFYEDMKENPKREIWKILEFVGRSLPEETVDLMVQHTSFKEMKKNPMANYTTIPQELMDHSISPFMRKGMTGDWKTTFTVAQNEHFDVDYAEKMAGCSLSFRSEL</sequence>
<dbReference type="EC" id="2.8.2.1" evidence="3"/>
<dbReference type="EMBL" id="D85514">
    <property type="protein sequence ID" value="BAA12822.1"/>
    <property type="molecule type" value="mRNA"/>
</dbReference>
<dbReference type="PIR" id="G02924">
    <property type="entry name" value="G02924"/>
</dbReference>
<dbReference type="SMR" id="P52846"/>
<dbReference type="STRING" id="9541.ENSMFAP00000042972"/>
<dbReference type="eggNOG" id="KOG1584">
    <property type="taxonomic scope" value="Eukaryota"/>
</dbReference>
<dbReference type="BRENDA" id="2.8.2.1">
    <property type="organism ID" value="1793"/>
</dbReference>
<dbReference type="Proteomes" id="UP000233100">
    <property type="component" value="Unplaced"/>
</dbReference>
<dbReference type="GO" id="GO:0005829">
    <property type="term" value="C:cytosol"/>
    <property type="evidence" value="ECO:0000250"/>
    <property type="project" value="UniProtKB"/>
</dbReference>
<dbReference type="GO" id="GO:0050656">
    <property type="term" value="F:3'-phosphoadenosine 5'-phosphosulfate binding"/>
    <property type="evidence" value="ECO:0000250"/>
    <property type="project" value="UniProtKB"/>
</dbReference>
<dbReference type="GO" id="GO:0004062">
    <property type="term" value="F:aryl sulfotransferase activity"/>
    <property type="evidence" value="ECO:0000250"/>
    <property type="project" value="UniProtKB"/>
</dbReference>
<dbReference type="GO" id="GO:0050294">
    <property type="term" value="F:steroid sulfotransferase activity"/>
    <property type="evidence" value="ECO:0000250"/>
    <property type="project" value="UniProtKB"/>
</dbReference>
<dbReference type="GO" id="GO:0008146">
    <property type="term" value="F:sulfotransferase activity"/>
    <property type="evidence" value="ECO:0000250"/>
    <property type="project" value="UniProtKB"/>
</dbReference>
<dbReference type="GO" id="GO:0042420">
    <property type="term" value="P:dopamine catabolic process"/>
    <property type="evidence" value="ECO:0000250"/>
    <property type="project" value="UniProtKB"/>
</dbReference>
<dbReference type="GO" id="GO:0008210">
    <property type="term" value="P:estrogen metabolic process"/>
    <property type="evidence" value="ECO:0000250"/>
    <property type="project" value="UniProtKB"/>
</dbReference>
<dbReference type="GO" id="GO:0042403">
    <property type="term" value="P:thyroid hormone metabolic process"/>
    <property type="evidence" value="ECO:0000250"/>
    <property type="project" value="UniProtKB"/>
</dbReference>
<dbReference type="GO" id="GO:0006805">
    <property type="term" value="P:xenobiotic metabolic process"/>
    <property type="evidence" value="ECO:0000250"/>
    <property type="project" value="UniProtKB"/>
</dbReference>
<dbReference type="FunFam" id="3.40.50.300:FF:000433">
    <property type="entry name" value="Estrogen sulfotransferase"/>
    <property type="match status" value="1"/>
</dbReference>
<dbReference type="Gene3D" id="3.40.50.300">
    <property type="entry name" value="P-loop containing nucleotide triphosphate hydrolases"/>
    <property type="match status" value="1"/>
</dbReference>
<dbReference type="InterPro" id="IPR027417">
    <property type="entry name" value="P-loop_NTPase"/>
</dbReference>
<dbReference type="InterPro" id="IPR000863">
    <property type="entry name" value="Sulfotransferase_dom"/>
</dbReference>
<dbReference type="PANTHER" id="PTHR11783">
    <property type="entry name" value="SULFOTRANSFERASE SULT"/>
    <property type="match status" value="1"/>
</dbReference>
<dbReference type="Pfam" id="PF00685">
    <property type="entry name" value="Sulfotransfer_1"/>
    <property type="match status" value="1"/>
</dbReference>
<dbReference type="SUPFAM" id="SSF52540">
    <property type="entry name" value="P-loop containing nucleoside triphosphate hydrolases"/>
    <property type="match status" value="1"/>
</dbReference>
<keyword id="KW-0128">Catecholamine metabolism</keyword>
<keyword id="KW-0963">Cytoplasm</keyword>
<keyword id="KW-0443">Lipid metabolism</keyword>
<keyword id="KW-0597">Phosphoprotein</keyword>
<keyword id="KW-1185">Reference proteome</keyword>
<keyword id="KW-0753">Steroid metabolism</keyword>
<keyword id="KW-0808">Transferase</keyword>
<feature type="chain" id="PRO_0000085129" description="Sulfotransferase 1A1">
    <location>
        <begin position="1"/>
        <end position="295"/>
    </location>
</feature>
<feature type="active site" description="Proton acceptor" evidence="1">
    <location>
        <position position="108"/>
    </location>
</feature>
<feature type="binding site" evidence="3">
    <location>
        <begin position="48"/>
        <end position="53"/>
    </location>
    <ligand>
        <name>3'-phosphoadenylyl sulfate</name>
        <dbReference type="ChEBI" id="CHEBI:58339"/>
    </ligand>
</feature>
<feature type="binding site" evidence="3">
    <location>
        <begin position="106"/>
        <end position="108"/>
    </location>
    <ligand>
        <name>substrate</name>
    </ligand>
</feature>
<feature type="binding site" evidence="3">
    <location>
        <position position="130"/>
    </location>
    <ligand>
        <name>3'-phosphoadenylyl sulfate</name>
        <dbReference type="ChEBI" id="CHEBI:58339"/>
    </ligand>
</feature>
<feature type="binding site" evidence="3">
    <location>
        <position position="138"/>
    </location>
    <ligand>
        <name>3'-phosphoadenylyl sulfate</name>
        <dbReference type="ChEBI" id="CHEBI:58339"/>
    </ligand>
</feature>
<feature type="binding site" evidence="3">
    <location>
        <position position="193"/>
    </location>
    <ligand>
        <name>3'-phosphoadenylyl sulfate</name>
        <dbReference type="ChEBI" id="CHEBI:58339"/>
    </ligand>
</feature>
<feature type="binding site" evidence="3">
    <location>
        <begin position="227"/>
        <end position="232"/>
    </location>
    <ligand>
        <name>3'-phosphoadenylyl sulfate</name>
        <dbReference type="ChEBI" id="CHEBI:58339"/>
    </ligand>
</feature>
<feature type="binding site" evidence="3">
    <location>
        <begin position="255"/>
        <end position="259"/>
    </location>
    <ligand>
        <name>3'-phosphoadenylyl sulfate</name>
        <dbReference type="ChEBI" id="CHEBI:58339"/>
    </ligand>
</feature>
<feature type="modified residue" description="Phosphoserine" evidence="2">
    <location>
        <position position="138"/>
    </location>
</feature>
<accession>P52846</accession>
<comment type="function">
    <text evidence="2 3">Sulfotransferase that utilizes 3'-phospho-5'-adenylyl sulfate (PAPS) as sulfonate donor to catalyze the sulfate conjugation of a wide variety of acceptor molecules bearing a hydroxyl or an amine group. Sulfonation increases the water solubility of most compounds, and therefore their renal excretion, but it can also result in bioactivation to form active metabolites. Displays broad substrate specificity for small phenolic compounds. Plays an important role in the sulfonation of endogenous molecules such as steroid hormones (By similarity). Mediates also the metabolic activation of carcinogenic N-hydroxyarylamines leading to highly reactive intermediates capable of forming DNA adducts, potentially resulting in mutagenesis (By similarity). May play a role in gut microbiota-host metabolic interaction. O-sulfonates 4-ethylphenol (4-EP), a dietary tyrosine-derived metabolite produced by gut bacteria. The product 4-EPS crosses the blood-brain barrier and may negatively regulate oligodendrocyte maturation and myelination, affecting the functional connectivity of different brain regions associated with the limbic system. Catalyzes the sulfate conjugation of dopamine. Catalyzes the sulfation of T4 (L-thyroxine/3,5,3',5'-tetraiodothyronine), T3 (3,5,3'-triiodothyronine), rT3 (3,3',5'-triiodothyronine) and 3,3'-T2 (3,3'-diiodothyronine), with a substrate preference of 3,3'-T2 &gt; rT3 &gt; T3 &gt; T4 (By similarity).</text>
</comment>
<comment type="catalytic activity">
    <reaction evidence="3">
        <text>a phenol + 3'-phosphoadenylyl sulfate = an aryl sulfate + adenosine 3',5'-bisphosphate + H(+)</text>
        <dbReference type="Rhea" id="RHEA:12164"/>
        <dbReference type="ChEBI" id="CHEBI:15378"/>
        <dbReference type="ChEBI" id="CHEBI:33853"/>
        <dbReference type="ChEBI" id="CHEBI:58339"/>
        <dbReference type="ChEBI" id="CHEBI:58343"/>
        <dbReference type="ChEBI" id="CHEBI:140317"/>
        <dbReference type="EC" id="2.8.2.1"/>
    </reaction>
    <physiologicalReaction direction="left-to-right" evidence="3">
        <dbReference type="Rhea" id="RHEA:12165"/>
    </physiologicalReaction>
</comment>
<comment type="catalytic activity">
    <reaction evidence="3">
        <text>17beta-estradiol + 3'-phosphoadenylyl sulfate = 17beta-estradiol 3-sulfate + adenosine 3',5'-bisphosphate + H(+)</text>
        <dbReference type="Rhea" id="RHEA:52372"/>
        <dbReference type="ChEBI" id="CHEBI:15378"/>
        <dbReference type="ChEBI" id="CHEBI:16469"/>
        <dbReference type="ChEBI" id="CHEBI:58339"/>
        <dbReference type="ChEBI" id="CHEBI:58343"/>
        <dbReference type="ChEBI" id="CHEBI:136582"/>
    </reaction>
    <physiologicalReaction direction="left-to-right" evidence="3">
        <dbReference type="Rhea" id="RHEA:52373"/>
    </physiologicalReaction>
</comment>
<comment type="catalytic activity">
    <reaction evidence="3">
        <text>4-ethylphenol + 3'-phosphoadenylyl sulfate = 4-ethylphenyl sulfate + adenosine 3',5'-bisphosphate + H(+)</text>
        <dbReference type="Rhea" id="RHEA:70607"/>
        <dbReference type="ChEBI" id="CHEBI:15378"/>
        <dbReference type="ChEBI" id="CHEBI:49584"/>
        <dbReference type="ChEBI" id="CHEBI:58339"/>
        <dbReference type="ChEBI" id="CHEBI:58343"/>
        <dbReference type="ChEBI" id="CHEBI:133681"/>
    </reaction>
    <physiologicalReaction direction="left-to-right" evidence="3">
        <dbReference type="Rhea" id="RHEA:70608"/>
    </physiologicalReaction>
</comment>
<comment type="catalytic activity">
    <reaction evidence="3">
        <text>4-nitrophenol + 3'-phosphoadenylyl sulfate = 4-nitrophenyl sulfate + adenosine 3',5'-bisphosphate</text>
        <dbReference type="Rhea" id="RHEA:66548"/>
        <dbReference type="ChEBI" id="CHEBI:57917"/>
        <dbReference type="ChEBI" id="CHEBI:58339"/>
        <dbReference type="ChEBI" id="CHEBI:58343"/>
        <dbReference type="ChEBI" id="CHEBI:140994"/>
    </reaction>
    <physiologicalReaction direction="left-to-right" evidence="3">
        <dbReference type="Rhea" id="RHEA:66549"/>
    </physiologicalReaction>
</comment>
<comment type="catalytic activity">
    <reaction evidence="3">
        <text>dopamine + 3'-phosphoadenylyl sulfate = dopamine 3-O-sulfate + adenosine 3',5'-bisphosphate + H(+)</text>
        <dbReference type="Rhea" id="RHEA:67880"/>
        <dbReference type="ChEBI" id="CHEBI:15378"/>
        <dbReference type="ChEBI" id="CHEBI:58339"/>
        <dbReference type="ChEBI" id="CHEBI:58343"/>
        <dbReference type="ChEBI" id="CHEBI:59905"/>
        <dbReference type="ChEBI" id="CHEBI:133524"/>
    </reaction>
    <physiologicalReaction direction="left-to-right" evidence="3">
        <dbReference type="Rhea" id="RHEA:67881"/>
    </physiologicalReaction>
</comment>
<comment type="catalytic activity">
    <reaction evidence="3">
        <text>dopamine + 3'-phosphoadenylyl sulfate = dopamine 4-O-sulfate + adenosine 3',5'-bisphosphate + H(+)</text>
        <dbReference type="Rhea" id="RHEA:67884"/>
        <dbReference type="ChEBI" id="CHEBI:15378"/>
        <dbReference type="ChEBI" id="CHEBI:58339"/>
        <dbReference type="ChEBI" id="CHEBI:58343"/>
        <dbReference type="ChEBI" id="CHEBI:59905"/>
        <dbReference type="ChEBI" id="CHEBI:133529"/>
    </reaction>
    <physiologicalReaction direction="left-to-right" evidence="3">
        <dbReference type="Rhea" id="RHEA:67885"/>
    </physiologicalReaction>
</comment>
<comment type="catalytic activity">
    <reaction evidence="3">
        <text>3,3',5-triiodo-L-thyronine + 3'-phosphoadenylyl sulfate = 3,3',5-triiodo-L-thyronine sulfate + adenosine 3',5'-bisphosphate + H(+)</text>
        <dbReference type="Rhea" id="RHEA:67876"/>
        <dbReference type="ChEBI" id="CHEBI:15378"/>
        <dbReference type="ChEBI" id="CHEBI:58339"/>
        <dbReference type="ChEBI" id="CHEBI:58343"/>
        <dbReference type="ChEBI" id="CHEBI:176511"/>
        <dbReference type="ChEBI" id="CHEBI:533015"/>
    </reaction>
    <physiologicalReaction direction="left-to-right" evidence="3">
        <dbReference type="Rhea" id="RHEA:67877"/>
    </physiologicalReaction>
</comment>
<comment type="catalytic activity">
    <reaction evidence="3">
        <text>3,3',5'-triiodo-L-thyronine + 3'-phosphoadenylyl sulfate = 3,3',5'-triiodo-L-thyronine sulfate + adenosine 3',5'-bisphosphate + H(+)</text>
        <dbReference type="Rhea" id="RHEA:67888"/>
        <dbReference type="ChEBI" id="CHEBI:15378"/>
        <dbReference type="ChEBI" id="CHEBI:57261"/>
        <dbReference type="ChEBI" id="CHEBI:58339"/>
        <dbReference type="ChEBI" id="CHEBI:58343"/>
        <dbReference type="ChEBI" id="CHEBI:176513"/>
    </reaction>
    <physiologicalReaction direction="left-to-right" evidence="3">
        <dbReference type="Rhea" id="RHEA:67889"/>
    </physiologicalReaction>
</comment>
<comment type="catalytic activity">
    <reaction evidence="3">
        <text>3,3'-diiodo-L-thyronine + 3'-phosphoadenylyl sulfate = 3,3'-diiodo-L-thyronine sulfate + adenosine 3',5'-bisphosphate + H(+)</text>
        <dbReference type="Rhea" id="RHEA:67892"/>
        <dbReference type="ChEBI" id="CHEBI:15378"/>
        <dbReference type="ChEBI" id="CHEBI:58339"/>
        <dbReference type="ChEBI" id="CHEBI:58343"/>
        <dbReference type="ChEBI" id="CHEBI:176514"/>
        <dbReference type="ChEBI" id="CHEBI:176515"/>
    </reaction>
    <physiologicalReaction direction="left-to-right" evidence="3">
        <dbReference type="Rhea" id="RHEA:67893"/>
    </physiologicalReaction>
</comment>
<comment type="catalytic activity">
    <reaction evidence="3">
        <text>L-thyroxine + 3'-phosphoadenylyl sulfate = L-thyroxine sulfate + adenosine 3',5'-bisphosphate + H(+)</text>
        <dbReference type="Rhea" id="RHEA:83575"/>
        <dbReference type="ChEBI" id="CHEBI:15378"/>
        <dbReference type="ChEBI" id="CHEBI:58339"/>
        <dbReference type="ChEBI" id="CHEBI:58343"/>
        <dbReference type="ChEBI" id="CHEBI:58448"/>
        <dbReference type="ChEBI" id="CHEBI:176512"/>
    </reaction>
    <physiologicalReaction direction="left-to-right" evidence="3">
        <dbReference type="Rhea" id="RHEA:83576"/>
    </physiologicalReaction>
</comment>
<comment type="subunit">
    <text evidence="3">Homodimer.</text>
</comment>
<comment type="subcellular location">
    <subcellularLocation>
        <location evidence="2">Cytoplasm</location>
    </subcellularLocation>
</comment>
<comment type="similarity">
    <text evidence="5">Belongs to the sulfotransferase 1 family.</text>
</comment>
<evidence type="ECO:0000250" key="1">
    <source>
        <dbReference type="UniProtKB" id="P0DMM9"/>
    </source>
</evidence>
<evidence type="ECO:0000250" key="2">
    <source>
        <dbReference type="UniProtKB" id="P17988"/>
    </source>
</evidence>
<evidence type="ECO:0000250" key="3">
    <source>
        <dbReference type="UniProtKB" id="P50225"/>
    </source>
</evidence>
<evidence type="ECO:0000303" key="4">
    <source ref="1"/>
</evidence>
<evidence type="ECO:0000305" key="5"/>
<reference key="1">
    <citation type="submission" date="1996-05" db="EMBL/GenBank/DDBJ databases">
        <title>cDNA cloning and bacterial expression of monkey liver phenol sulfotransferase.</title>
        <authorList>
            <person name="Ogura K."/>
            <person name="Satsukawa M."/>
            <person name="Okuda H."/>
            <person name="Watabe T."/>
        </authorList>
    </citation>
    <scope>NUCLEOTIDE SEQUENCE [MRNA]</scope>
    <source>
        <tissue>Liver</tissue>
    </source>
</reference>
<name>ST1A1_MACFA</name>
<proteinExistence type="evidence at transcript level"/>
<protein>
    <recommendedName>
        <fullName>Sulfotransferase 1A1</fullName>
        <shortName>ST1A1</shortName>
        <ecNumber evidence="3">2.8.2.1</ecNumber>
    </recommendedName>
    <alternativeName>
        <fullName>Aryl sulfotransferase</fullName>
    </alternativeName>
    <alternativeName>
        <fullName evidence="4">Phenol sulfotransferase</fullName>
    </alternativeName>
    <alternativeName>
        <fullName>Phenol-sulfating phenol sulfotransferase</fullName>
        <shortName>P-PST</shortName>
    </alternativeName>
</protein>